<keyword id="KW-0010">Activator</keyword>
<keyword id="KW-0932">Cytokinin signaling pathway</keyword>
<keyword id="KW-0238">DNA-binding</keyword>
<keyword id="KW-0539">Nucleus</keyword>
<keyword id="KW-0597">Phosphoprotein</keyword>
<keyword id="KW-1185">Reference proteome</keyword>
<keyword id="KW-0804">Transcription</keyword>
<keyword id="KW-0805">Transcription regulation</keyword>
<keyword id="KW-0902">Two-component regulatory system</keyword>
<sequence length="696" mass="75923">MLLGALRMEERKGLMGRERDQFPVGMRVLAVDDDPVCLKVLETLLRRCQYHVTSTNQAITALKLLRENRDMFDLVISDVHMPDMDGFKLLELVGLEMDLPVIMLSVNGETKTVMKGITHGACDYLLKPVRIEELRNIWQHVVRRKFGNRERNNLDFSKECNKPQSADTDHGPYQPTCGSSDQNGRSSRKRKELHGEDDDEGDDNDYQENDEPSAAKKPRVVWSVELHRKFVAAVNQLGIDKAVPKRILELMNVEKLTRENVASHLQKYRLYLKRLGAVASQQASIVAAFGGRDPSFLHIGAFEGLQSYQPFAPSAALPSFNPHGLLTRTSAAAAFGLQELAAPSSTIQTSTGNVTVGHCLEENQQANLAQGLTAAIGQPQLQQNWIHQEGNGLSDVFSGSSLTNTLSSTLQRVPSSSLPPQELLECKQAKVSMPPSIRIPPSSSALLERTLGVSTNLGDSSISQQGALPIDGGFSADRLPLHSSFDGAVATKLDTSLAASQREIGQQGKFSVSMLVSPSDNLALAKNAKTGASSSGSTIILPLDTARHSDYLQFGGASNSLQKMDGQKQDHIQSSNIIWSSMPSTQLPSDTQIHNTQSQRLDSGSFNHNIGAHLADQTNASASILPQMKFDTRISEEKMKQKNTYDLGSSKLQGGFNSSGCNFDGLLNSIIKVEKDDLPFMDNELGCDLFPLGACI</sequence>
<evidence type="ECO:0000250" key="1">
    <source>
        <dbReference type="UniProtKB" id="Q940D0"/>
    </source>
</evidence>
<evidence type="ECO:0000255" key="2">
    <source>
        <dbReference type="PROSITE-ProRule" id="PRU00169"/>
    </source>
</evidence>
<evidence type="ECO:0000255" key="3">
    <source>
        <dbReference type="PROSITE-ProRule" id="PRU00625"/>
    </source>
</evidence>
<evidence type="ECO:0000256" key="4">
    <source>
        <dbReference type="SAM" id="MobiDB-lite"/>
    </source>
</evidence>
<evidence type="ECO:0000305" key="5"/>
<evidence type="ECO:0000312" key="6">
    <source>
        <dbReference type="EMBL" id="EEC80137.1"/>
    </source>
</evidence>
<reference key="1">
    <citation type="journal article" date="2005" name="PLoS Biol.">
        <title>The genomes of Oryza sativa: a history of duplications.</title>
        <authorList>
            <person name="Yu J."/>
            <person name="Wang J."/>
            <person name="Lin W."/>
            <person name="Li S."/>
            <person name="Li H."/>
            <person name="Zhou J."/>
            <person name="Ni P."/>
            <person name="Dong W."/>
            <person name="Hu S."/>
            <person name="Zeng C."/>
            <person name="Zhang J."/>
            <person name="Zhang Y."/>
            <person name="Li R."/>
            <person name="Xu Z."/>
            <person name="Li S."/>
            <person name="Li X."/>
            <person name="Zheng H."/>
            <person name="Cong L."/>
            <person name="Lin L."/>
            <person name="Yin J."/>
            <person name="Geng J."/>
            <person name="Li G."/>
            <person name="Shi J."/>
            <person name="Liu J."/>
            <person name="Lv H."/>
            <person name="Li J."/>
            <person name="Wang J."/>
            <person name="Deng Y."/>
            <person name="Ran L."/>
            <person name="Shi X."/>
            <person name="Wang X."/>
            <person name="Wu Q."/>
            <person name="Li C."/>
            <person name="Ren X."/>
            <person name="Wang J."/>
            <person name="Wang X."/>
            <person name="Li D."/>
            <person name="Liu D."/>
            <person name="Zhang X."/>
            <person name="Ji Z."/>
            <person name="Zhao W."/>
            <person name="Sun Y."/>
            <person name="Zhang Z."/>
            <person name="Bao J."/>
            <person name="Han Y."/>
            <person name="Dong L."/>
            <person name="Ji J."/>
            <person name="Chen P."/>
            <person name="Wu S."/>
            <person name="Liu J."/>
            <person name="Xiao Y."/>
            <person name="Bu D."/>
            <person name="Tan J."/>
            <person name="Yang L."/>
            <person name="Ye C."/>
            <person name="Zhang J."/>
            <person name="Xu J."/>
            <person name="Zhou Y."/>
            <person name="Yu Y."/>
            <person name="Zhang B."/>
            <person name="Zhuang S."/>
            <person name="Wei H."/>
            <person name="Liu B."/>
            <person name="Lei M."/>
            <person name="Yu H."/>
            <person name="Li Y."/>
            <person name="Xu H."/>
            <person name="Wei S."/>
            <person name="He X."/>
            <person name="Fang L."/>
            <person name="Zhang Z."/>
            <person name="Zhang Y."/>
            <person name="Huang X."/>
            <person name="Su Z."/>
            <person name="Tong W."/>
            <person name="Li J."/>
            <person name="Tong Z."/>
            <person name="Li S."/>
            <person name="Ye J."/>
            <person name="Wang L."/>
            <person name="Fang L."/>
            <person name="Lei T."/>
            <person name="Chen C.-S."/>
            <person name="Chen H.-C."/>
            <person name="Xu Z."/>
            <person name="Li H."/>
            <person name="Huang H."/>
            <person name="Zhang F."/>
            <person name="Xu H."/>
            <person name="Li N."/>
            <person name="Zhao C."/>
            <person name="Li S."/>
            <person name="Dong L."/>
            <person name="Huang Y."/>
            <person name="Li L."/>
            <person name="Xi Y."/>
            <person name="Qi Q."/>
            <person name="Li W."/>
            <person name="Zhang B."/>
            <person name="Hu W."/>
            <person name="Zhang Y."/>
            <person name="Tian X."/>
            <person name="Jiao Y."/>
            <person name="Liang X."/>
            <person name="Jin J."/>
            <person name="Gao L."/>
            <person name="Zheng W."/>
            <person name="Hao B."/>
            <person name="Liu S.-M."/>
            <person name="Wang W."/>
            <person name="Yuan L."/>
            <person name="Cao M."/>
            <person name="McDermott J."/>
            <person name="Samudrala R."/>
            <person name="Wang J."/>
            <person name="Wong G.K.-S."/>
            <person name="Yang H."/>
        </authorList>
    </citation>
    <scope>NUCLEOTIDE SEQUENCE [LARGE SCALE GENOMIC DNA]</scope>
    <source>
        <strain>cv. 93-11</strain>
    </source>
</reference>
<organism>
    <name type="scientific">Oryza sativa subsp. indica</name>
    <name type="common">Rice</name>
    <dbReference type="NCBI Taxonomy" id="39946"/>
    <lineage>
        <taxon>Eukaryota</taxon>
        <taxon>Viridiplantae</taxon>
        <taxon>Streptophyta</taxon>
        <taxon>Embryophyta</taxon>
        <taxon>Tracheophyta</taxon>
        <taxon>Spermatophyta</taxon>
        <taxon>Magnoliopsida</taxon>
        <taxon>Liliopsida</taxon>
        <taxon>Poales</taxon>
        <taxon>Poaceae</taxon>
        <taxon>BOP clade</taxon>
        <taxon>Oryzoideae</taxon>
        <taxon>Oryzeae</taxon>
        <taxon>Oryzinae</taxon>
        <taxon>Oryza</taxon>
        <taxon>Oryza sativa</taxon>
    </lineage>
</organism>
<gene>
    <name evidence="5" type="primary">RR22</name>
    <name evidence="6" type="ORF">OsI_21925</name>
</gene>
<feature type="chain" id="PRO_0000433843" description="Two-component response regulator ORR22">
    <location>
        <begin position="1"/>
        <end position="696"/>
    </location>
</feature>
<feature type="domain" description="Response regulatory" evidence="2">
    <location>
        <begin position="27"/>
        <end position="142"/>
    </location>
</feature>
<feature type="DNA-binding region" description="Myb-like GARP" evidence="3">
    <location>
        <begin position="214"/>
        <end position="273"/>
    </location>
</feature>
<feature type="region of interest" description="Disordered" evidence="4">
    <location>
        <begin position="154"/>
        <end position="214"/>
    </location>
</feature>
<feature type="compositionally biased region" description="Polar residues" evidence="4">
    <location>
        <begin position="176"/>
        <end position="185"/>
    </location>
</feature>
<feature type="compositionally biased region" description="Acidic residues" evidence="4">
    <location>
        <begin position="195"/>
        <end position="211"/>
    </location>
</feature>
<feature type="modified residue" description="4-aspartylphosphate" evidence="2">
    <location>
        <position position="78"/>
    </location>
</feature>
<protein>
    <recommendedName>
        <fullName evidence="5">Two-component response regulator ORR22</fullName>
    </recommendedName>
</protein>
<proteinExistence type="inferred from homology"/>
<accession>B8B3I4</accession>
<dbReference type="EMBL" id="CM000131">
    <property type="protein sequence ID" value="EEC80137.1"/>
    <property type="molecule type" value="Genomic_DNA"/>
</dbReference>
<dbReference type="SMR" id="B8B3I4"/>
<dbReference type="STRING" id="39946.B8B3I4"/>
<dbReference type="EnsemblPlants" id="BGIOSGA022430-TA">
    <property type="protein sequence ID" value="BGIOSGA022430-PA"/>
    <property type="gene ID" value="BGIOSGA022430"/>
</dbReference>
<dbReference type="EnsemblPlants" id="OsMH63_06G005640_01">
    <property type="protein sequence ID" value="OsMH63_06G005640_01"/>
    <property type="gene ID" value="OsMH63_06G005640"/>
</dbReference>
<dbReference type="Gramene" id="BGIOSGA022430-TA">
    <property type="protein sequence ID" value="BGIOSGA022430-PA"/>
    <property type="gene ID" value="BGIOSGA022430"/>
</dbReference>
<dbReference type="Gramene" id="OsMH63_06G005640_01">
    <property type="protein sequence ID" value="OsMH63_06G005640_01"/>
    <property type="gene ID" value="OsMH63_06G005640"/>
</dbReference>
<dbReference type="HOGENOM" id="CLU_024359_0_0_1"/>
<dbReference type="OMA" id="NGIASHC"/>
<dbReference type="Proteomes" id="UP000007015">
    <property type="component" value="Chromosome 6"/>
</dbReference>
<dbReference type="GO" id="GO:0005634">
    <property type="term" value="C:nucleus"/>
    <property type="evidence" value="ECO:0007669"/>
    <property type="project" value="UniProtKB-SubCell"/>
</dbReference>
<dbReference type="GO" id="GO:0003700">
    <property type="term" value="F:DNA-binding transcription factor activity"/>
    <property type="evidence" value="ECO:0007669"/>
    <property type="project" value="InterPro"/>
</dbReference>
<dbReference type="GO" id="GO:0043565">
    <property type="term" value="F:sequence-specific DNA binding"/>
    <property type="evidence" value="ECO:0007669"/>
    <property type="project" value="EnsemblPlants"/>
</dbReference>
<dbReference type="GO" id="GO:0009736">
    <property type="term" value="P:cytokinin-activated signaling pathway"/>
    <property type="evidence" value="ECO:0007669"/>
    <property type="project" value="UniProtKB-KW"/>
</dbReference>
<dbReference type="GO" id="GO:0000160">
    <property type="term" value="P:phosphorelay signal transduction system"/>
    <property type="evidence" value="ECO:0007669"/>
    <property type="project" value="UniProtKB-KW"/>
</dbReference>
<dbReference type="GO" id="GO:0045893">
    <property type="term" value="P:positive regulation of DNA-templated transcription"/>
    <property type="evidence" value="ECO:0007669"/>
    <property type="project" value="EnsemblPlants"/>
</dbReference>
<dbReference type="CDD" id="cd17584">
    <property type="entry name" value="REC_typeB_ARR-like"/>
    <property type="match status" value="1"/>
</dbReference>
<dbReference type="FunFam" id="1.10.10.60:FF:000007">
    <property type="entry name" value="Two-component response regulator"/>
    <property type="match status" value="1"/>
</dbReference>
<dbReference type="FunFam" id="3.40.50.2300:FF:000132">
    <property type="entry name" value="Two-component response regulator"/>
    <property type="match status" value="1"/>
</dbReference>
<dbReference type="Gene3D" id="3.40.50.2300">
    <property type="match status" value="1"/>
</dbReference>
<dbReference type="Gene3D" id="1.10.10.60">
    <property type="entry name" value="Homeodomain-like"/>
    <property type="match status" value="1"/>
</dbReference>
<dbReference type="InterPro" id="IPR045279">
    <property type="entry name" value="ARR-like"/>
</dbReference>
<dbReference type="InterPro" id="IPR011006">
    <property type="entry name" value="CheY-like_superfamily"/>
</dbReference>
<dbReference type="InterPro" id="IPR009057">
    <property type="entry name" value="Homeodomain-like_sf"/>
</dbReference>
<dbReference type="InterPro" id="IPR017930">
    <property type="entry name" value="Myb_dom"/>
</dbReference>
<dbReference type="InterPro" id="IPR006447">
    <property type="entry name" value="Myb_dom_plants"/>
</dbReference>
<dbReference type="InterPro" id="IPR017053">
    <property type="entry name" value="Response_reg_B-typ_pln"/>
</dbReference>
<dbReference type="InterPro" id="IPR001005">
    <property type="entry name" value="SANT/Myb"/>
</dbReference>
<dbReference type="InterPro" id="IPR001789">
    <property type="entry name" value="Sig_transdc_resp-reg_receiver"/>
</dbReference>
<dbReference type="NCBIfam" id="TIGR01557">
    <property type="entry name" value="myb_SHAQKYF"/>
    <property type="match status" value="1"/>
</dbReference>
<dbReference type="PANTHER" id="PTHR43874">
    <property type="entry name" value="TWO-COMPONENT RESPONSE REGULATOR"/>
    <property type="match status" value="1"/>
</dbReference>
<dbReference type="PANTHER" id="PTHR43874:SF135">
    <property type="entry name" value="TWO-COMPONENT RESPONSE REGULATOR ORR22"/>
    <property type="match status" value="1"/>
</dbReference>
<dbReference type="Pfam" id="PF00249">
    <property type="entry name" value="Myb_DNA-binding"/>
    <property type="match status" value="1"/>
</dbReference>
<dbReference type="Pfam" id="PF00072">
    <property type="entry name" value="Response_reg"/>
    <property type="match status" value="1"/>
</dbReference>
<dbReference type="PIRSF" id="PIRSF036392">
    <property type="entry name" value="RR_ARR_type-B"/>
    <property type="match status" value="1"/>
</dbReference>
<dbReference type="SMART" id="SM00448">
    <property type="entry name" value="REC"/>
    <property type="match status" value="1"/>
</dbReference>
<dbReference type="SUPFAM" id="SSF52172">
    <property type="entry name" value="CheY-like"/>
    <property type="match status" value="1"/>
</dbReference>
<dbReference type="SUPFAM" id="SSF46689">
    <property type="entry name" value="Homeodomain-like"/>
    <property type="match status" value="1"/>
</dbReference>
<dbReference type="PROSITE" id="PS51294">
    <property type="entry name" value="HTH_MYB"/>
    <property type="match status" value="1"/>
</dbReference>
<dbReference type="PROSITE" id="PS50110">
    <property type="entry name" value="RESPONSE_REGULATORY"/>
    <property type="match status" value="1"/>
</dbReference>
<comment type="function">
    <text evidence="1">Transcriptional activator that binds specific DNA sequence. Functions as a response regulator involved in His-to-Asp phosphorelay signal transduction system. Phosphorylation of the Asp residue in the receiver domain activates the ability of the protein to promote the transcription of target genes. May directly activate some type-A response regulators in response to cytokinins.</text>
</comment>
<comment type="subcellular location">
    <subcellularLocation>
        <location evidence="3">Nucleus</location>
    </subcellularLocation>
</comment>
<comment type="PTM">
    <text evidence="5">Two-component system major event consists of a His-to-Asp phosphorelay between a sensor histidine kinase (HK) and a response regulator (RR). In plants, the His-to-Asp phosphorelay involves an additional intermediate named Histidine-containing phosphotransfer protein (HPt). This multistep phosphorelay consists of a His-Asp-His-Asp sequential transfer of a phosphate group between first a His and an Asp of the HK protein, followed by the transfer to a conserved His of the HPt protein and finally the transfer to an Asp in the receiver domain of the RR protein.</text>
</comment>
<comment type="similarity">
    <text evidence="5">Belongs to the ARR family. Type-B subfamily.</text>
</comment>
<name>ORR22_ORYSI</name>